<accession>O13924</accession>
<dbReference type="EC" id="2.7.11.1"/>
<dbReference type="EMBL" id="CU329670">
    <property type="protein sequence ID" value="CAB16874.1"/>
    <property type="molecule type" value="Genomic_DNA"/>
</dbReference>
<dbReference type="PIR" id="T38259">
    <property type="entry name" value="T38259"/>
</dbReference>
<dbReference type="RefSeq" id="NP_593176.1">
    <property type="nucleotide sequence ID" value="NM_001018572.2"/>
</dbReference>
<dbReference type="SMR" id="O13924"/>
<dbReference type="BioGRID" id="278446">
    <property type="interactions" value="17"/>
</dbReference>
<dbReference type="FunCoup" id="O13924">
    <property type="interactions" value="207"/>
</dbReference>
<dbReference type="STRING" id="284812.O13924"/>
<dbReference type="iPTMnet" id="O13924"/>
<dbReference type="PaxDb" id="4896-SPAC23C4.03.1"/>
<dbReference type="EnsemblFungi" id="SPAC23C4.03.1">
    <property type="protein sequence ID" value="SPAC23C4.03.1:pep"/>
    <property type="gene ID" value="SPAC23C4.03"/>
</dbReference>
<dbReference type="GeneID" id="2541959"/>
<dbReference type="KEGG" id="spo:2541959"/>
<dbReference type="PomBase" id="SPAC23C4.03">
    <property type="gene designation" value="hrk1"/>
</dbReference>
<dbReference type="VEuPathDB" id="FungiDB:SPAC23C4.03"/>
<dbReference type="eggNOG" id="KOG2464">
    <property type="taxonomic scope" value="Eukaryota"/>
</dbReference>
<dbReference type="HOGENOM" id="CLU_559165_0_0_1"/>
<dbReference type="InParanoid" id="O13924"/>
<dbReference type="OMA" id="DNAIWAS"/>
<dbReference type="PhylomeDB" id="O13924"/>
<dbReference type="Reactome" id="R-SPO-9020702">
    <property type="pathway name" value="Interleukin-1 signaling"/>
</dbReference>
<dbReference type="PRO" id="PR:O13924"/>
<dbReference type="Proteomes" id="UP000002485">
    <property type="component" value="Chromosome I"/>
</dbReference>
<dbReference type="GO" id="GO:0005737">
    <property type="term" value="C:cytoplasm"/>
    <property type="evidence" value="ECO:0000318"/>
    <property type="project" value="GO_Central"/>
</dbReference>
<dbReference type="GO" id="GO:0005829">
    <property type="term" value="C:cytosol"/>
    <property type="evidence" value="ECO:0007005"/>
    <property type="project" value="PomBase"/>
</dbReference>
<dbReference type="GO" id="GO:0031934">
    <property type="term" value="C:mating-type region heterochromatin"/>
    <property type="evidence" value="ECO:0000314"/>
    <property type="project" value="PomBase"/>
</dbReference>
<dbReference type="GO" id="GO:0005634">
    <property type="term" value="C:nucleus"/>
    <property type="evidence" value="ECO:0000318"/>
    <property type="project" value="GO_Central"/>
</dbReference>
<dbReference type="GO" id="GO:0005721">
    <property type="term" value="C:pericentric heterochromatin"/>
    <property type="evidence" value="ECO:0000314"/>
    <property type="project" value="PomBase"/>
</dbReference>
<dbReference type="GO" id="GO:0140720">
    <property type="term" value="C:subtelomeric heterochromatin"/>
    <property type="evidence" value="ECO:0000314"/>
    <property type="project" value="PomBase"/>
</dbReference>
<dbReference type="GO" id="GO:0005524">
    <property type="term" value="F:ATP binding"/>
    <property type="evidence" value="ECO:0007669"/>
    <property type="project" value="UniProtKB-KW"/>
</dbReference>
<dbReference type="GO" id="GO:0072354">
    <property type="term" value="F:histone H3T3 kinase activity"/>
    <property type="evidence" value="ECO:0000314"/>
    <property type="project" value="PomBase"/>
</dbReference>
<dbReference type="GO" id="GO:0106310">
    <property type="term" value="F:protein serine kinase activity"/>
    <property type="evidence" value="ECO:0007669"/>
    <property type="project" value="RHEA"/>
</dbReference>
<dbReference type="GO" id="GO:0051456">
    <property type="term" value="P:attachment of meiotic spindle microtubules to meiosis II kinetochore"/>
    <property type="evidence" value="ECO:0000315"/>
    <property type="project" value="PomBase"/>
</dbReference>
<dbReference type="GO" id="GO:0035556">
    <property type="term" value="P:intracellular signal transduction"/>
    <property type="evidence" value="ECO:0000318"/>
    <property type="project" value="GO_Central"/>
</dbReference>
<dbReference type="GO" id="GO:0000278">
    <property type="term" value="P:mitotic cell cycle"/>
    <property type="evidence" value="ECO:0000318"/>
    <property type="project" value="GO_Central"/>
</dbReference>
<dbReference type="GO" id="GO:1990758">
    <property type="term" value="P:mitotic sister chromatid biorientation"/>
    <property type="evidence" value="ECO:0000315"/>
    <property type="project" value="PomBase"/>
</dbReference>
<dbReference type="FunFam" id="1.10.510.10:FF:000401">
    <property type="entry name" value="serine/threonine-protein kinase haspin"/>
    <property type="match status" value="1"/>
</dbReference>
<dbReference type="Gene3D" id="3.30.200.20">
    <property type="entry name" value="Phosphorylase Kinase, domain 1"/>
    <property type="match status" value="1"/>
</dbReference>
<dbReference type="Gene3D" id="1.10.510.10">
    <property type="entry name" value="Transferase(Phosphotransferase) domain 1"/>
    <property type="match status" value="1"/>
</dbReference>
<dbReference type="InterPro" id="IPR024604">
    <property type="entry name" value="GSG2_C"/>
</dbReference>
<dbReference type="InterPro" id="IPR011009">
    <property type="entry name" value="Kinase-like_dom_sf"/>
</dbReference>
<dbReference type="InterPro" id="IPR000719">
    <property type="entry name" value="Prot_kinase_dom"/>
</dbReference>
<dbReference type="PANTHER" id="PTHR24419">
    <property type="entry name" value="INTERLEUKIN-1 RECEPTOR-ASSOCIATED KINASE"/>
    <property type="match status" value="1"/>
</dbReference>
<dbReference type="PANTHER" id="PTHR24419:SF18">
    <property type="entry name" value="SERINE_THREONINE-PROTEIN KINASE HASPIN"/>
    <property type="match status" value="1"/>
</dbReference>
<dbReference type="Pfam" id="PF12330">
    <property type="entry name" value="Haspin_kinase"/>
    <property type="match status" value="1"/>
</dbReference>
<dbReference type="SMART" id="SM01331">
    <property type="entry name" value="DUF3635"/>
    <property type="match status" value="1"/>
</dbReference>
<dbReference type="SUPFAM" id="SSF56112">
    <property type="entry name" value="Protein kinase-like (PK-like)"/>
    <property type="match status" value="1"/>
</dbReference>
<dbReference type="PROSITE" id="PS50011">
    <property type="entry name" value="PROTEIN_KINASE_DOM"/>
    <property type="match status" value="1"/>
</dbReference>
<keyword id="KW-0067">ATP-binding</keyword>
<keyword id="KW-0131">Cell cycle</keyword>
<keyword id="KW-0158">Chromosome</keyword>
<keyword id="KW-0963">Cytoplasm</keyword>
<keyword id="KW-0418">Kinase</keyword>
<keyword id="KW-0547">Nucleotide-binding</keyword>
<keyword id="KW-1185">Reference proteome</keyword>
<keyword id="KW-0723">Serine/threonine-protein kinase</keyword>
<keyword id="KW-0808">Transferase</keyword>
<protein>
    <recommendedName>
        <fullName>Serine/threonine-protein kinase haspin homolog hrk1</fullName>
        <ecNumber>2.7.11.1</ecNumber>
    </recommendedName>
</protein>
<reference key="1">
    <citation type="journal article" date="2002" name="Nature">
        <title>The genome sequence of Schizosaccharomyces pombe.</title>
        <authorList>
            <person name="Wood V."/>
            <person name="Gwilliam R."/>
            <person name="Rajandream M.A."/>
            <person name="Lyne M.H."/>
            <person name="Lyne R."/>
            <person name="Stewart A."/>
            <person name="Sgouros J.G."/>
            <person name="Peat N."/>
            <person name="Hayles J."/>
            <person name="Baker S.G."/>
            <person name="Basham D."/>
            <person name="Bowman S."/>
            <person name="Brooks K."/>
            <person name="Brown D."/>
            <person name="Brown S."/>
            <person name="Chillingworth T."/>
            <person name="Churcher C.M."/>
            <person name="Collins M."/>
            <person name="Connor R."/>
            <person name="Cronin A."/>
            <person name="Davis P."/>
            <person name="Feltwell T."/>
            <person name="Fraser A."/>
            <person name="Gentles S."/>
            <person name="Goble A."/>
            <person name="Hamlin N."/>
            <person name="Harris D.E."/>
            <person name="Hidalgo J."/>
            <person name="Hodgson G."/>
            <person name="Holroyd S."/>
            <person name="Hornsby T."/>
            <person name="Howarth S."/>
            <person name="Huckle E.J."/>
            <person name="Hunt S."/>
            <person name="Jagels K."/>
            <person name="James K.D."/>
            <person name="Jones L."/>
            <person name="Jones M."/>
            <person name="Leather S."/>
            <person name="McDonald S."/>
            <person name="McLean J."/>
            <person name="Mooney P."/>
            <person name="Moule S."/>
            <person name="Mungall K.L."/>
            <person name="Murphy L.D."/>
            <person name="Niblett D."/>
            <person name="Odell C."/>
            <person name="Oliver K."/>
            <person name="O'Neil S."/>
            <person name="Pearson D."/>
            <person name="Quail M.A."/>
            <person name="Rabbinowitsch E."/>
            <person name="Rutherford K.M."/>
            <person name="Rutter S."/>
            <person name="Saunders D."/>
            <person name="Seeger K."/>
            <person name="Sharp S."/>
            <person name="Skelton J."/>
            <person name="Simmonds M.N."/>
            <person name="Squares R."/>
            <person name="Squares S."/>
            <person name="Stevens K."/>
            <person name="Taylor K."/>
            <person name="Taylor R.G."/>
            <person name="Tivey A."/>
            <person name="Walsh S.V."/>
            <person name="Warren T."/>
            <person name="Whitehead S."/>
            <person name="Woodward J.R."/>
            <person name="Volckaert G."/>
            <person name="Aert R."/>
            <person name="Robben J."/>
            <person name="Grymonprez B."/>
            <person name="Weltjens I."/>
            <person name="Vanstreels E."/>
            <person name="Rieger M."/>
            <person name="Schaefer M."/>
            <person name="Mueller-Auer S."/>
            <person name="Gabel C."/>
            <person name="Fuchs M."/>
            <person name="Duesterhoeft A."/>
            <person name="Fritzc C."/>
            <person name="Holzer E."/>
            <person name="Moestl D."/>
            <person name="Hilbert H."/>
            <person name="Borzym K."/>
            <person name="Langer I."/>
            <person name="Beck A."/>
            <person name="Lehrach H."/>
            <person name="Reinhardt R."/>
            <person name="Pohl T.M."/>
            <person name="Eger P."/>
            <person name="Zimmermann W."/>
            <person name="Wedler H."/>
            <person name="Wambutt R."/>
            <person name="Purnelle B."/>
            <person name="Goffeau A."/>
            <person name="Cadieu E."/>
            <person name="Dreano S."/>
            <person name="Gloux S."/>
            <person name="Lelaure V."/>
            <person name="Mottier S."/>
            <person name="Galibert F."/>
            <person name="Aves S.J."/>
            <person name="Xiang Z."/>
            <person name="Hunt C."/>
            <person name="Moore K."/>
            <person name="Hurst S.M."/>
            <person name="Lucas M."/>
            <person name="Rochet M."/>
            <person name="Gaillardin C."/>
            <person name="Tallada V.A."/>
            <person name="Garzon A."/>
            <person name="Thode G."/>
            <person name="Daga R.R."/>
            <person name="Cruzado L."/>
            <person name="Jimenez J."/>
            <person name="Sanchez M."/>
            <person name="del Rey F."/>
            <person name="Benito J."/>
            <person name="Dominguez A."/>
            <person name="Revuelta J.L."/>
            <person name="Moreno S."/>
            <person name="Armstrong J."/>
            <person name="Forsburg S.L."/>
            <person name="Cerutti L."/>
            <person name="Lowe T."/>
            <person name="McCombie W.R."/>
            <person name="Paulsen I."/>
            <person name="Potashkin J."/>
            <person name="Shpakovski G.V."/>
            <person name="Ussery D."/>
            <person name="Barrell B.G."/>
            <person name="Nurse P."/>
        </authorList>
    </citation>
    <scope>NUCLEOTIDE SEQUENCE [LARGE SCALE GENOMIC DNA]</scope>
    <source>
        <strain>972 / ATCC 24843</strain>
    </source>
</reference>
<reference key="2">
    <citation type="journal article" date="2006" name="Nat. Biotechnol.">
        <title>ORFeome cloning and global analysis of protein localization in the fission yeast Schizosaccharomyces pombe.</title>
        <authorList>
            <person name="Matsuyama A."/>
            <person name="Arai R."/>
            <person name="Yashiroda Y."/>
            <person name="Shirai A."/>
            <person name="Kamata A."/>
            <person name="Sekido S."/>
            <person name="Kobayashi Y."/>
            <person name="Hashimoto A."/>
            <person name="Hamamoto M."/>
            <person name="Hiraoka Y."/>
            <person name="Horinouchi S."/>
            <person name="Yoshida M."/>
        </authorList>
    </citation>
    <scope>SUBCELLULAR LOCATION [LARGE SCALE ANALYSIS]</scope>
</reference>
<reference key="3">
    <citation type="journal article" date="2010" name="Science">
        <title>Two histone marks establish the inner centromere and chromosome bi-orientation.</title>
        <authorList>
            <person name="Yamagishi Y."/>
            <person name="Honda T."/>
            <person name="Tanno Y."/>
            <person name="Watanabe Y."/>
        </authorList>
    </citation>
    <scope>FUNCTION</scope>
    <scope>SUBCELLULAR LOCATION</scope>
    <scope>INTERACTION WITH PDS5 AND SWI6</scope>
</reference>
<proteinExistence type="evidence at protein level"/>
<organism>
    <name type="scientific">Schizosaccharomyces pombe (strain 972 / ATCC 24843)</name>
    <name type="common">Fission yeast</name>
    <dbReference type="NCBI Taxonomy" id="284812"/>
    <lineage>
        <taxon>Eukaryota</taxon>
        <taxon>Fungi</taxon>
        <taxon>Dikarya</taxon>
        <taxon>Ascomycota</taxon>
        <taxon>Taphrinomycotina</taxon>
        <taxon>Schizosaccharomycetes</taxon>
        <taxon>Schizosaccharomycetales</taxon>
        <taxon>Schizosaccharomycetaceae</taxon>
        <taxon>Schizosaccharomyces</taxon>
    </lineage>
</organism>
<comment type="function">
    <text evidence="2">Serine/threonine haspin-like protein kinase involved in cell cycle regulation. Acts in chromosomal passenger complex (CPC) targeting to centromeres by phosphorylating histone H3 at 'Thr3' (H3T3ph).</text>
</comment>
<comment type="catalytic activity">
    <reaction>
        <text>L-seryl-[protein] + ATP = O-phospho-L-seryl-[protein] + ADP + H(+)</text>
        <dbReference type="Rhea" id="RHEA:17989"/>
        <dbReference type="Rhea" id="RHEA-COMP:9863"/>
        <dbReference type="Rhea" id="RHEA-COMP:11604"/>
        <dbReference type="ChEBI" id="CHEBI:15378"/>
        <dbReference type="ChEBI" id="CHEBI:29999"/>
        <dbReference type="ChEBI" id="CHEBI:30616"/>
        <dbReference type="ChEBI" id="CHEBI:83421"/>
        <dbReference type="ChEBI" id="CHEBI:456216"/>
        <dbReference type="EC" id="2.7.11.1"/>
    </reaction>
</comment>
<comment type="catalytic activity">
    <reaction>
        <text>L-threonyl-[protein] + ATP = O-phospho-L-threonyl-[protein] + ADP + H(+)</text>
        <dbReference type="Rhea" id="RHEA:46608"/>
        <dbReference type="Rhea" id="RHEA-COMP:11060"/>
        <dbReference type="Rhea" id="RHEA-COMP:11605"/>
        <dbReference type="ChEBI" id="CHEBI:15378"/>
        <dbReference type="ChEBI" id="CHEBI:30013"/>
        <dbReference type="ChEBI" id="CHEBI:30616"/>
        <dbReference type="ChEBI" id="CHEBI:61977"/>
        <dbReference type="ChEBI" id="CHEBI:456216"/>
        <dbReference type="EC" id="2.7.11.1"/>
    </reaction>
</comment>
<comment type="subunit">
    <text evidence="2">Interacts with pds5 and swi6.</text>
</comment>
<comment type="subcellular location">
    <subcellularLocation>
        <location>Cytoplasm</location>
    </subcellularLocation>
    <subcellularLocation>
        <location>Chromosome</location>
    </subcellularLocation>
</comment>
<comment type="similarity">
    <text evidence="1">Belongs to the protein kinase superfamily. Ser/Thr protein kinase family. Haspin subfamily.</text>
</comment>
<name>HASP_SCHPO</name>
<evidence type="ECO:0000255" key="1">
    <source>
        <dbReference type="PROSITE-ProRule" id="PRU00159"/>
    </source>
</evidence>
<evidence type="ECO:0000269" key="2">
    <source>
    </source>
</evidence>
<gene>
    <name type="primary">hrk1</name>
    <name type="ORF">SPAC23C4.03</name>
</gene>
<sequence>MESRSKVKTYGKNRRYINKDIEIWASLDERPCALKPRNIENFNNQERSDLEHIHSKPKKDSLLSWNILLKKGSYKENELLAKRNQNLVPTVIIPASPRDNASKSVVSKKEVVNLSSSVALSGKPANNSKLDPLHRLLQIVAQEDALPFSQFVKSQTFEIQKIGEASYSEVYQASNADDVPVVWKVIPFGEDGQAQYADVLNEVQISQWIKVDGFANLHQVVVVKGTYPSLLLEEWDRYLMQNGSENDRPDSYSSTQLYCVLCLDHSGTDLEHFELRSWRECWSVFYETLKILSLVETRYEFEHRDLHWGNILIRKADRSEEEVSFLLNEISLDDIESVDFPGSQDKADDFDNILQVTLIDFTLARASYSQGIISYNEFNDPDLFNGVDDYQFDIYRLMSRVTKGRWAQFFPITNVLWLHYLIHQLLHKKNLSSPLTETETLMRSRLKQIFRLIDPVKTMQFQQAEDSIRSKSTVTSATSLLNWVRQKY</sequence>
<feature type="chain" id="PRO_0000352813" description="Serine/threonine-protein kinase haspin homolog hrk1">
    <location>
        <begin position="1"/>
        <end position="488"/>
    </location>
</feature>
<feature type="domain" description="Protein kinase" evidence="1">
    <location>
        <begin position="156"/>
        <end position="488"/>
    </location>
</feature>
<feature type="active site" description="Proton acceptor" evidence="1">
    <location>
        <position position="305"/>
    </location>
</feature>
<feature type="binding site" evidence="1">
    <location>
        <begin position="162"/>
        <end position="170"/>
    </location>
    <ligand>
        <name>ATP</name>
        <dbReference type="ChEBI" id="CHEBI:30616"/>
    </ligand>
</feature>
<feature type="binding site" evidence="1">
    <location>
        <position position="184"/>
    </location>
    <ligand>
        <name>ATP</name>
        <dbReference type="ChEBI" id="CHEBI:30616"/>
    </ligand>
</feature>